<name>CYSJ_ECOL6</name>
<feature type="initiator methionine" description="Removed" evidence="1">
    <location>
        <position position="1"/>
    </location>
</feature>
<feature type="chain" id="PRO_0000199925" description="Sulfite reductase [NADPH] flavoprotein alpha-component">
    <location>
        <begin position="2"/>
        <end position="599"/>
    </location>
</feature>
<feature type="domain" description="Flavodoxin-like" evidence="2">
    <location>
        <begin position="64"/>
        <end position="202"/>
    </location>
</feature>
<feature type="domain" description="FAD-binding FR-type" evidence="2">
    <location>
        <begin position="234"/>
        <end position="448"/>
    </location>
</feature>
<feature type="binding site" evidence="2">
    <location>
        <begin position="70"/>
        <end position="75"/>
    </location>
    <ligand>
        <name>FMN</name>
        <dbReference type="ChEBI" id="CHEBI:58210"/>
    </ligand>
</feature>
<feature type="binding site" evidence="2">
    <location>
        <begin position="117"/>
        <end position="120"/>
    </location>
    <ligand>
        <name>FMN</name>
        <dbReference type="ChEBI" id="CHEBI:58210"/>
    </ligand>
</feature>
<feature type="binding site" evidence="2">
    <location>
        <begin position="153"/>
        <end position="162"/>
    </location>
    <ligand>
        <name>FMN</name>
        <dbReference type="ChEBI" id="CHEBI:58210"/>
    </ligand>
</feature>
<feature type="binding site" evidence="2">
    <location>
        <position position="322"/>
    </location>
    <ligand>
        <name>FAD</name>
        <dbReference type="ChEBI" id="CHEBI:57692"/>
    </ligand>
</feature>
<feature type="binding site" evidence="2">
    <location>
        <position position="356"/>
    </location>
    <ligand>
        <name>FAD</name>
        <dbReference type="ChEBI" id="CHEBI:57692"/>
    </ligand>
</feature>
<feature type="binding site" evidence="2">
    <location>
        <begin position="386"/>
        <end position="389"/>
    </location>
    <ligand>
        <name>FAD</name>
        <dbReference type="ChEBI" id="CHEBI:57692"/>
    </ligand>
</feature>
<feature type="binding site" evidence="2">
    <location>
        <begin position="404"/>
        <end position="406"/>
    </location>
    <ligand>
        <name>FAD</name>
        <dbReference type="ChEBI" id="CHEBI:57692"/>
    </ligand>
</feature>
<feature type="binding site" evidence="2">
    <location>
        <position position="410"/>
    </location>
    <ligand>
        <name>FAD</name>
        <dbReference type="ChEBI" id="CHEBI:57692"/>
    </ligand>
</feature>
<feature type="binding site" evidence="2">
    <location>
        <begin position="419"/>
        <end position="422"/>
    </location>
    <ligand>
        <name>FAD</name>
        <dbReference type="ChEBI" id="CHEBI:57692"/>
    </ligand>
</feature>
<feature type="binding site" evidence="2">
    <location>
        <begin position="519"/>
        <end position="520"/>
    </location>
    <ligand>
        <name>NADP(+)</name>
        <dbReference type="ChEBI" id="CHEBI:58349"/>
    </ligand>
</feature>
<feature type="binding site" evidence="2">
    <location>
        <begin position="525"/>
        <end position="529"/>
    </location>
    <ligand>
        <name>NADP(+)</name>
        <dbReference type="ChEBI" id="CHEBI:58349"/>
    </ligand>
</feature>
<feature type="binding site" evidence="2">
    <location>
        <position position="561"/>
    </location>
    <ligand>
        <name>NADP(+)</name>
        <dbReference type="ChEBI" id="CHEBI:58349"/>
    </ligand>
</feature>
<feature type="binding site" evidence="2">
    <location>
        <position position="599"/>
    </location>
    <ligand>
        <name>FAD</name>
        <dbReference type="ChEBI" id="CHEBI:57692"/>
    </ligand>
</feature>
<gene>
    <name evidence="2" type="primary">cysJ</name>
    <name type="ordered locus">c3323</name>
</gene>
<sequence>MTTQVPPSALLPLNPEQLARLQAATTDLTPTQLAWVSGYFWGVLNQQPAALAATPAPAAEMPGITIISASQTGNARRVAEALRDDLLAAKLNVKLVNAGDYKFKQIASEKLLIVVTSTQGEGEPPEEAVALHKFLFSKKAPKLENTAFAVFSLGDSSYEFFCQSGKDFDSKLAELGGERLLDRVDADVEYQAAASEWRARVVDALKSRAPVAAPSQSVATGAVNEIHTSPYSKDAPLAASLSVNQKITGRNSEKDVRHIEIDLGDSGLRYQPGDALGVWYQNDPALVKELVELLWLKGDEPVTVEGKTLPLNEALQWHFELTVNTANIVENYATLTRSETLLPLVGDKAKLQHYAATTPIVDMVRFSPAQLDAEALINLLRPLTPRLYSIASSQAEVENEVHVTVGVVRYDVEGRARAGGASSFLADRVEEEGEVRVFIEHNDNFRLPTNPETPVIMIGPGTGIAPFRAFMQQRAADEAPGKNWLFFGNPHFTEDFLYQVEWQRYVKEGVLTRIDLAWSRDQKEKIYVQDKLREQGAELWRWINDGAHIYVCGDANRMAKDVEQALLEVIAEFGGMDTEAADEFLSELRVERRYQRDVY</sequence>
<protein>
    <recommendedName>
        <fullName evidence="2">Sulfite reductase [NADPH] flavoprotein alpha-component</fullName>
        <shortName evidence="2">SiR-FP</shortName>
        <ecNumber evidence="2">1.8.1.2</ecNumber>
    </recommendedName>
</protein>
<dbReference type="EC" id="1.8.1.2" evidence="2"/>
<dbReference type="EMBL" id="AE014075">
    <property type="protein sequence ID" value="AAN81772.1"/>
    <property type="molecule type" value="Genomic_DNA"/>
</dbReference>
<dbReference type="RefSeq" id="WP_000211900.1">
    <property type="nucleotide sequence ID" value="NZ_CP051263.1"/>
</dbReference>
<dbReference type="SMR" id="Q8FEI7"/>
<dbReference type="STRING" id="199310.c3323"/>
<dbReference type="KEGG" id="ecc:c3323"/>
<dbReference type="eggNOG" id="COG0369">
    <property type="taxonomic scope" value="Bacteria"/>
</dbReference>
<dbReference type="HOGENOM" id="CLU_001570_17_7_6"/>
<dbReference type="BioCyc" id="ECOL199310:C3323-MONOMER"/>
<dbReference type="UniPathway" id="UPA00140">
    <property type="reaction ID" value="UER00207"/>
</dbReference>
<dbReference type="Proteomes" id="UP000001410">
    <property type="component" value="Chromosome"/>
</dbReference>
<dbReference type="GO" id="GO:0005829">
    <property type="term" value="C:cytosol"/>
    <property type="evidence" value="ECO:0007669"/>
    <property type="project" value="TreeGrafter"/>
</dbReference>
<dbReference type="GO" id="GO:0050660">
    <property type="term" value="F:flavin adenine dinucleotide binding"/>
    <property type="evidence" value="ECO:0007669"/>
    <property type="project" value="InterPro"/>
</dbReference>
<dbReference type="GO" id="GO:0010181">
    <property type="term" value="F:FMN binding"/>
    <property type="evidence" value="ECO:0007669"/>
    <property type="project" value="InterPro"/>
</dbReference>
<dbReference type="GO" id="GO:0004783">
    <property type="term" value="F:sulfite reductase (NADPH) activity"/>
    <property type="evidence" value="ECO:0007669"/>
    <property type="project" value="UniProtKB-UniRule"/>
</dbReference>
<dbReference type="GO" id="GO:0019344">
    <property type="term" value="P:cysteine biosynthetic process"/>
    <property type="evidence" value="ECO:0007669"/>
    <property type="project" value="UniProtKB-KW"/>
</dbReference>
<dbReference type="GO" id="GO:0070814">
    <property type="term" value="P:hydrogen sulfide biosynthetic process"/>
    <property type="evidence" value="ECO:0007669"/>
    <property type="project" value="UniProtKB-UniRule"/>
</dbReference>
<dbReference type="GO" id="GO:0000103">
    <property type="term" value="P:sulfate assimilation"/>
    <property type="evidence" value="ECO:0007669"/>
    <property type="project" value="UniProtKB-UniRule"/>
</dbReference>
<dbReference type="CDD" id="cd06199">
    <property type="entry name" value="SiR"/>
    <property type="match status" value="1"/>
</dbReference>
<dbReference type="FunFam" id="3.40.50.80:FF:000001">
    <property type="entry name" value="NADPH--cytochrome P450 reductase 1"/>
    <property type="match status" value="1"/>
</dbReference>
<dbReference type="FunFam" id="1.20.990.10:FF:000004">
    <property type="entry name" value="Sulfite reductase [NADPH] flavoprotein alpha-component"/>
    <property type="match status" value="1"/>
</dbReference>
<dbReference type="FunFam" id="3.40.50.360:FF:000018">
    <property type="entry name" value="Sulfite reductase [NADPH] flavoprotein alpha-component"/>
    <property type="match status" value="1"/>
</dbReference>
<dbReference type="Gene3D" id="3.40.50.360">
    <property type="match status" value="1"/>
</dbReference>
<dbReference type="Gene3D" id="1.20.990.10">
    <property type="entry name" value="NADPH-cytochrome p450 Reductase, Chain A, domain 3"/>
    <property type="match status" value="1"/>
</dbReference>
<dbReference type="Gene3D" id="3.40.50.80">
    <property type="entry name" value="Nucleotide-binding domain of ferredoxin-NADP reductase (FNR) module"/>
    <property type="match status" value="1"/>
</dbReference>
<dbReference type="Gene3D" id="2.40.30.10">
    <property type="entry name" value="Translation factors"/>
    <property type="match status" value="1"/>
</dbReference>
<dbReference type="HAMAP" id="MF_01541">
    <property type="entry name" value="CysJ"/>
    <property type="match status" value="1"/>
</dbReference>
<dbReference type="InterPro" id="IPR010199">
    <property type="entry name" value="CysJ"/>
</dbReference>
<dbReference type="InterPro" id="IPR003097">
    <property type="entry name" value="CysJ-like_FAD-binding"/>
</dbReference>
<dbReference type="InterPro" id="IPR029758">
    <property type="entry name" value="CysJ_Proteobact"/>
</dbReference>
<dbReference type="InterPro" id="IPR017927">
    <property type="entry name" value="FAD-bd_FR_type"/>
</dbReference>
<dbReference type="InterPro" id="IPR001094">
    <property type="entry name" value="Flavdoxin-like"/>
</dbReference>
<dbReference type="InterPro" id="IPR008254">
    <property type="entry name" value="Flavodoxin/NO_synth"/>
</dbReference>
<dbReference type="InterPro" id="IPR001709">
    <property type="entry name" value="Flavoprot_Pyr_Nucl_cyt_Rdtase"/>
</dbReference>
<dbReference type="InterPro" id="IPR029039">
    <property type="entry name" value="Flavoprotein-like_sf"/>
</dbReference>
<dbReference type="InterPro" id="IPR039261">
    <property type="entry name" value="FNR_nucleotide-bd"/>
</dbReference>
<dbReference type="InterPro" id="IPR023173">
    <property type="entry name" value="NADPH_Cyt_P450_Rdtase_alpha"/>
</dbReference>
<dbReference type="InterPro" id="IPR001433">
    <property type="entry name" value="OxRdtase_FAD/NAD-bd"/>
</dbReference>
<dbReference type="InterPro" id="IPR017938">
    <property type="entry name" value="Riboflavin_synthase-like_b-brl"/>
</dbReference>
<dbReference type="NCBIfam" id="TIGR01931">
    <property type="entry name" value="cysJ"/>
    <property type="match status" value="1"/>
</dbReference>
<dbReference type="NCBIfam" id="NF004859">
    <property type="entry name" value="PRK06214.1"/>
    <property type="match status" value="1"/>
</dbReference>
<dbReference type="NCBIfam" id="NF008197">
    <property type="entry name" value="PRK10953.1"/>
    <property type="match status" value="1"/>
</dbReference>
<dbReference type="PANTHER" id="PTHR19384:SF128">
    <property type="entry name" value="NADPH OXIDOREDUCTASE A"/>
    <property type="match status" value="1"/>
</dbReference>
<dbReference type="PANTHER" id="PTHR19384">
    <property type="entry name" value="NITRIC OXIDE SYNTHASE-RELATED"/>
    <property type="match status" value="1"/>
</dbReference>
<dbReference type="Pfam" id="PF00667">
    <property type="entry name" value="FAD_binding_1"/>
    <property type="match status" value="1"/>
</dbReference>
<dbReference type="Pfam" id="PF00258">
    <property type="entry name" value="Flavodoxin_1"/>
    <property type="match status" value="1"/>
</dbReference>
<dbReference type="Pfam" id="PF00175">
    <property type="entry name" value="NAD_binding_1"/>
    <property type="match status" value="1"/>
</dbReference>
<dbReference type="PIRSF" id="PIRSF000207">
    <property type="entry name" value="SiR-FP_CysJ"/>
    <property type="match status" value="1"/>
</dbReference>
<dbReference type="PRINTS" id="PR00369">
    <property type="entry name" value="FLAVODOXIN"/>
</dbReference>
<dbReference type="PRINTS" id="PR00371">
    <property type="entry name" value="FPNCR"/>
</dbReference>
<dbReference type="SUPFAM" id="SSF52343">
    <property type="entry name" value="Ferredoxin reductase-like, C-terminal NADP-linked domain"/>
    <property type="match status" value="1"/>
</dbReference>
<dbReference type="SUPFAM" id="SSF52218">
    <property type="entry name" value="Flavoproteins"/>
    <property type="match status" value="1"/>
</dbReference>
<dbReference type="SUPFAM" id="SSF63380">
    <property type="entry name" value="Riboflavin synthase domain-like"/>
    <property type="match status" value="1"/>
</dbReference>
<dbReference type="PROSITE" id="PS51384">
    <property type="entry name" value="FAD_FR"/>
    <property type="match status" value="1"/>
</dbReference>
<dbReference type="PROSITE" id="PS50902">
    <property type="entry name" value="FLAVODOXIN_LIKE"/>
    <property type="match status" value="1"/>
</dbReference>
<organism>
    <name type="scientific">Escherichia coli O6:H1 (strain CFT073 / ATCC 700928 / UPEC)</name>
    <dbReference type="NCBI Taxonomy" id="199310"/>
    <lineage>
        <taxon>Bacteria</taxon>
        <taxon>Pseudomonadati</taxon>
        <taxon>Pseudomonadota</taxon>
        <taxon>Gammaproteobacteria</taxon>
        <taxon>Enterobacterales</taxon>
        <taxon>Enterobacteriaceae</taxon>
        <taxon>Escherichia</taxon>
    </lineage>
</organism>
<comment type="function">
    <text evidence="2">Component of the sulfite reductase complex that catalyzes the 6-electron reduction of sulfite to sulfide. This is one of several activities required for the biosynthesis of L-cysteine from sulfate. The flavoprotein component catalyzes the electron flow from NADPH -&gt; FAD -&gt; FMN to the hemoprotein component.</text>
</comment>
<comment type="catalytic activity">
    <reaction evidence="2">
        <text>hydrogen sulfide + 3 NADP(+) + 3 H2O = sulfite + 3 NADPH + 4 H(+)</text>
        <dbReference type="Rhea" id="RHEA:13801"/>
        <dbReference type="ChEBI" id="CHEBI:15377"/>
        <dbReference type="ChEBI" id="CHEBI:15378"/>
        <dbReference type="ChEBI" id="CHEBI:17359"/>
        <dbReference type="ChEBI" id="CHEBI:29919"/>
        <dbReference type="ChEBI" id="CHEBI:57783"/>
        <dbReference type="ChEBI" id="CHEBI:58349"/>
        <dbReference type="EC" id="1.8.1.2"/>
    </reaction>
</comment>
<comment type="cofactor">
    <cofactor evidence="2">
        <name>FAD</name>
        <dbReference type="ChEBI" id="CHEBI:57692"/>
    </cofactor>
    <text evidence="2">Binds 1 FAD per subunit.</text>
</comment>
<comment type="cofactor">
    <cofactor evidence="2">
        <name>FMN</name>
        <dbReference type="ChEBI" id="CHEBI:58210"/>
    </cofactor>
    <text evidence="2">Binds 1 FMN per subunit.</text>
</comment>
<comment type="pathway">
    <text evidence="2">Sulfur metabolism; hydrogen sulfide biosynthesis; hydrogen sulfide from sulfite (NADPH route): step 1/1.</text>
</comment>
<comment type="subunit">
    <text evidence="2">Alpha(8)-beta(8). The alpha component is a flavoprotein, the beta component is a hemoprotein.</text>
</comment>
<comment type="similarity">
    <text evidence="2">Belongs to the NADPH-dependent sulphite reductase flavoprotein subunit CysJ family.</text>
</comment>
<comment type="similarity">
    <text evidence="2">In the N-terminal section; belongs to the flavodoxin family.</text>
</comment>
<comment type="similarity">
    <text evidence="2">In the C-terminal section; belongs to the flavoprotein pyridine nucleotide cytochrome reductase family.</text>
</comment>
<proteinExistence type="inferred from homology"/>
<accession>Q8FEI7</accession>
<reference key="1">
    <citation type="journal article" date="2002" name="Proc. Natl. Acad. Sci. U.S.A.">
        <title>Extensive mosaic structure revealed by the complete genome sequence of uropathogenic Escherichia coli.</title>
        <authorList>
            <person name="Welch R.A."/>
            <person name="Burland V."/>
            <person name="Plunkett G. III"/>
            <person name="Redford P."/>
            <person name="Roesch P."/>
            <person name="Rasko D."/>
            <person name="Buckles E.L."/>
            <person name="Liou S.-R."/>
            <person name="Boutin A."/>
            <person name="Hackett J."/>
            <person name="Stroud D."/>
            <person name="Mayhew G.F."/>
            <person name="Rose D.J."/>
            <person name="Zhou S."/>
            <person name="Schwartz D.C."/>
            <person name="Perna N.T."/>
            <person name="Mobley H.L.T."/>
            <person name="Donnenberg M.S."/>
            <person name="Blattner F.R."/>
        </authorList>
    </citation>
    <scope>NUCLEOTIDE SEQUENCE [LARGE SCALE GENOMIC DNA]</scope>
    <source>
        <strain>CFT073 / ATCC 700928 / UPEC</strain>
    </source>
</reference>
<keyword id="KW-0028">Amino-acid biosynthesis</keyword>
<keyword id="KW-0198">Cysteine biosynthesis</keyword>
<keyword id="KW-0249">Electron transport</keyword>
<keyword id="KW-0274">FAD</keyword>
<keyword id="KW-0285">Flavoprotein</keyword>
<keyword id="KW-0288">FMN</keyword>
<keyword id="KW-0521">NADP</keyword>
<keyword id="KW-0560">Oxidoreductase</keyword>
<keyword id="KW-1185">Reference proteome</keyword>
<keyword id="KW-0813">Transport</keyword>
<evidence type="ECO:0000250" key="1"/>
<evidence type="ECO:0000255" key="2">
    <source>
        <dbReference type="HAMAP-Rule" id="MF_01541"/>
    </source>
</evidence>